<name>EFG_CARHZ</name>
<keyword id="KW-0963">Cytoplasm</keyword>
<keyword id="KW-0251">Elongation factor</keyword>
<keyword id="KW-0342">GTP-binding</keyword>
<keyword id="KW-0547">Nucleotide-binding</keyword>
<keyword id="KW-0648">Protein biosynthesis</keyword>
<keyword id="KW-1185">Reference proteome</keyword>
<accession>Q3A9R2</accession>
<proteinExistence type="inferred from homology"/>
<protein>
    <recommendedName>
        <fullName evidence="1">Elongation factor G</fullName>
        <shortName evidence="1">EF-G</shortName>
    </recommendedName>
</protein>
<dbReference type="EMBL" id="CP000141">
    <property type="protein sequence ID" value="ABB14098.1"/>
    <property type="molecule type" value="Genomic_DNA"/>
</dbReference>
<dbReference type="RefSeq" id="WP_011345195.1">
    <property type="nucleotide sequence ID" value="NC_007503.1"/>
</dbReference>
<dbReference type="SMR" id="Q3A9R2"/>
<dbReference type="FunCoup" id="Q3A9R2">
    <property type="interactions" value="471"/>
</dbReference>
<dbReference type="STRING" id="246194.CHY_2313"/>
<dbReference type="KEGG" id="chy:CHY_2313"/>
<dbReference type="eggNOG" id="COG0480">
    <property type="taxonomic scope" value="Bacteria"/>
</dbReference>
<dbReference type="HOGENOM" id="CLU_002794_4_1_9"/>
<dbReference type="InParanoid" id="Q3A9R2"/>
<dbReference type="OrthoDB" id="9804431at2"/>
<dbReference type="Proteomes" id="UP000002706">
    <property type="component" value="Chromosome"/>
</dbReference>
<dbReference type="GO" id="GO:0005737">
    <property type="term" value="C:cytoplasm"/>
    <property type="evidence" value="ECO:0007669"/>
    <property type="project" value="UniProtKB-SubCell"/>
</dbReference>
<dbReference type="GO" id="GO:0005525">
    <property type="term" value="F:GTP binding"/>
    <property type="evidence" value="ECO:0007669"/>
    <property type="project" value="UniProtKB-UniRule"/>
</dbReference>
<dbReference type="GO" id="GO:0003924">
    <property type="term" value="F:GTPase activity"/>
    <property type="evidence" value="ECO:0007669"/>
    <property type="project" value="InterPro"/>
</dbReference>
<dbReference type="GO" id="GO:0003746">
    <property type="term" value="F:translation elongation factor activity"/>
    <property type="evidence" value="ECO:0007669"/>
    <property type="project" value="UniProtKB-UniRule"/>
</dbReference>
<dbReference type="GO" id="GO:0032790">
    <property type="term" value="P:ribosome disassembly"/>
    <property type="evidence" value="ECO:0007669"/>
    <property type="project" value="TreeGrafter"/>
</dbReference>
<dbReference type="CDD" id="cd01886">
    <property type="entry name" value="EF-G"/>
    <property type="match status" value="1"/>
</dbReference>
<dbReference type="CDD" id="cd16262">
    <property type="entry name" value="EFG_III"/>
    <property type="match status" value="1"/>
</dbReference>
<dbReference type="CDD" id="cd01434">
    <property type="entry name" value="EFG_mtEFG1_IV"/>
    <property type="match status" value="1"/>
</dbReference>
<dbReference type="CDD" id="cd03713">
    <property type="entry name" value="EFG_mtEFG_C"/>
    <property type="match status" value="1"/>
</dbReference>
<dbReference type="CDD" id="cd04088">
    <property type="entry name" value="EFG_mtEFG_II"/>
    <property type="match status" value="1"/>
</dbReference>
<dbReference type="FunFam" id="2.40.30.10:FF:000006">
    <property type="entry name" value="Elongation factor G"/>
    <property type="match status" value="1"/>
</dbReference>
<dbReference type="FunFam" id="3.30.230.10:FF:000003">
    <property type="entry name" value="Elongation factor G"/>
    <property type="match status" value="1"/>
</dbReference>
<dbReference type="FunFam" id="3.30.70.240:FF:000001">
    <property type="entry name" value="Elongation factor G"/>
    <property type="match status" value="1"/>
</dbReference>
<dbReference type="FunFam" id="3.30.70.870:FF:000001">
    <property type="entry name" value="Elongation factor G"/>
    <property type="match status" value="1"/>
</dbReference>
<dbReference type="FunFam" id="3.40.50.300:FF:000029">
    <property type="entry name" value="Elongation factor G"/>
    <property type="match status" value="1"/>
</dbReference>
<dbReference type="Gene3D" id="3.30.230.10">
    <property type="match status" value="1"/>
</dbReference>
<dbReference type="Gene3D" id="3.30.70.240">
    <property type="match status" value="1"/>
</dbReference>
<dbReference type="Gene3D" id="3.30.70.870">
    <property type="entry name" value="Elongation Factor G (Translational Gtpase), domain 3"/>
    <property type="match status" value="1"/>
</dbReference>
<dbReference type="Gene3D" id="3.40.50.300">
    <property type="entry name" value="P-loop containing nucleotide triphosphate hydrolases"/>
    <property type="match status" value="1"/>
</dbReference>
<dbReference type="Gene3D" id="2.40.30.10">
    <property type="entry name" value="Translation factors"/>
    <property type="match status" value="1"/>
</dbReference>
<dbReference type="HAMAP" id="MF_00054_B">
    <property type="entry name" value="EF_G_EF_2_B"/>
    <property type="match status" value="1"/>
</dbReference>
<dbReference type="InterPro" id="IPR041095">
    <property type="entry name" value="EFG_II"/>
</dbReference>
<dbReference type="InterPro" id="IPR009022">
    <property type="entry name" value="EFG_III"/>
</dbReference>
<dbReference type="InterPro" id="IPR035647">
    <property type="entry name" value="EFG_III/V"/>
</dbReference>
<dbReference type="InterPro" id="IPR047872">
    <property type="entry name" value="EFG_IV"/>
</dbReference>
<dbReference type="InterPro" id="IPR035649">
    <property type="entry name" value="EFG_V"/>
</dbReference>
<dbReference type="InterPro" id="IPR000640">
    <property type="entry name" value="EFG_V-like"/>
</dbReference>
<dbReference type="InterPro" id="IPR004161">
    <property type="entry name" value="EFTu-like_2"/>
</dbReference>
<dbReference type="InterPro" id="IPR031157">
    <property type="entry name" value="G_TR_CS"/>
</dbReference>
<dbReference type="InterPro" id="IPR027417">
    <property type="entry name" value="P-loop_NTPase"/>
</dbReference>
<dbReference type="InterPro" id="IPR020568">
    <property type="entry name" value="Ribosomal_Su5_D2-typ_SF"/>
</dbReference>
<dbReference type="InterPro" id="IPR014721">
    <property type="entry name" value="Ribsml_uS5_D2-typ_fold_subgr"/>
</dbReference>
<dbReference type="InterPro" id="IPR005225">
    <property type="entry name" value="Small_GTP-bd"/>
</dbReference>
<dbReference type="InterPro" id="IPR000795">
    <property type="entry name" value="T_Tr_GTP-bd_dom"/>
</dbReference>
<dbReference type="InterPro" id="IPR009000">
    <property type="entry name" value="Transl_B-barrel_sf"/>
</dbReference>
<dbReference type="InterPro" id="IPR004540">
    <property type="entry name" value="Transl_elong_EFG/EF2"/>
</dbReference>
<dbReference type="InterPro" id="IPR005517">
    <property type="entry name" value="Transl_elong_EFG/EF2_IV"/>
</dbReference>
<dbReference type="NCBIfam" id="TIGR00484">
    <property type="entry name" value="EF-G"/>
    <property type="match status" value="1"/>
</dbReference>
<dbReference type="NCBIfam" id="NF009379">
    <property type="entry name" value="PRK12740.1-3"/>
    <property type="match status" value="1"/>
</dbReference>
<dbReference type="NCBIfam" id="NF009381">
    <property type="entry name" value="PRK12740.1-5"/>
    <property type="match status" value="1"/>
</dbReference>
<dbReference type="NCBIfam" id="NF009891">
    <property type="entry name" value="PRK13351.1-1"/>
    <property type="match status" value="1"/>
</dbReference>
<dbReference type="NCBIfam" id="TIGR00231">
    <property type="entry name" value="small_GTP"/>
    <property type="match status" value="1"/>
</dbReference>
<dbReference type="PANTHER" id="PTHR43261:SF1">
    <property type="entry name" value="RIBOSOME-RELEASING FACTOR 2, MITOCHONDRIAL"/>
    <property type="match status" value="1"/>
</dbReference>
<dbReference type="PANTHER" id="PTHR43261">
    <property type="entry name" value="TRANSLATION ELONGATION FACTOR G-RELATED"/>
    <property type="match status" value="1"/>
</dbReference>
<dbReference type="Pfam" id="PF00679">
    <property type="entry name" value="EFG_C"/>
    <property type="match status" value="1"/>
</dbReference>
<dbReference type="Pfam" id="PF14492">
    <property type="entry name" value="EFG_III"/>
    <property type="match status" value="1"/>
</dbReference>
<dbReference type="Pfam" id="PF03764">
    <property type="entry name" value="EFG_IV"/>
    <property type="match status" value="1"/>
</dbReference>
<dbReference type="Pfam" id="PF00009">
    <property type="entry name" value="GTP_EFTU"/>
    <property type="match status" value="1"/>
</dbReference>
<dbReference type="Pfam" id="PF03144">
    <property type="entry name" value="GTP_EFTU_D2"/>
    <property type="match status" value="1"/>
</dbReference>
<dbReference type="PRINTS" id="PR00315">
    <property type="entry name" value="ELONGATNFCT"/>
</dbReference>
<dbReference type="SMART" id="SM00838">
    <property type="entry name" value="EFG_C"/>
    <property type="match status" value="1"/>
</dbReference>
<dbReference type="SMART" id="SM00889">
    <property type="entry name" value="EFG_IV"/>
    <property type="match status" value="1"/>
</dbReference>
<dbReference type="SUPFAM" id="SSF54980">
    <property type="entry name" value="EF-G C-terminal domain-like"/>
    <property type="match status" value="2"/>
</dbReference>
<dbReference type="SUPFAM" id="SSF52540">
    <property type="entry name" value="P-loop containing nucleoside triphosphate hydrolases"/>
    <property type="match status" value="1"/>
</dbReference>
<dbReference type="SUPFAM" id="SSF54211">
    <property type="entry name" value="Ribosomal protein S5 domain 2-like"/>
    <property type="match status" value="1"/>
</dbReference>
<dbReference type="SUPFAM" id="SSF50447">
    <property type="entry name" value="Translation proteins"/>
    <property type="match status" value="1"/>
</dbReference>
<dbReference type="PROSITE" id="PS00301">
    <property type="entry name" value="G_TR_1"/>
    <property type="match status" value="1"/>
</dbReference>
<dbReference type="PROSITE" id="PS51722">
    <property type="entry name" value="G_TR_2"/>
    <property type="match status" value="1"/>
</dbReference>
<sequence>MPREYPLERTRNIGIMAHIDAGKTTTTERILFYTGKVHKMGEVHDGAATMDWMVQEQERGITITSAATTCFWKNHRINIIDTPGHVDFTVEVERSLRVLDGAVAIFCAVGGVEPQSETVWRQADKYGVPRIAYVNKMDRMGANFFEVVRQIKERLGANPVPIQLPIGNEDTFQGVIDLIENKAIIYTDDLGTQLAEAEIPAEMLDLVAEYREKVMEAAAEADEELMLKYLDGEELTPEEIRAGLRKATIAVKVVPVLCGSSFKNKGVQPLLDAIVYYLPSPVDIPAVRGINPETGDEDFRKASDSEPFAALAFKIMADPYVGKLTFFRVYSGVLKAGSYVLNSTKGKKERIGRLLRMHANHREEIDEVCSGDIAAAVGLKDTHTGDTICDEKHPIVLESMEFPEPVINVAIEPKTKQDQEKMSIALQRLAEEDPTFKMWTDQETGQTIIAGMGELHLEIIVDRLMREFKVEANVGKPQVAYKETVRGTAKAEGKYIRQTGGRGQYGHVWIEIEPLEPGKGYEFVNKIVGGVIPKEYIPAVDAGVREALESGVLAGYPVIDVRVTLFDGSFHEVDSSEMAFKIAGSMAAKQAVLKANPVLLEPIMKVEVVVPEEYMGEVIGDLNSRRGRIEGMEARNNMQVVRGYVPLAEMFGYATDLRSKTQGRGTYTMHFSHYEEVPKNLADQIIQKRQGK</sequence>
<gene>
    <name evidence="1" type="primary">fusA</name>
    <name type="ordered locus">CHY_2313</name>
</gene>
<organism>
    <name type="scientific">Carboxydothermus hydrogenoformans (strain ATCC BAA-161 / DSM 6008 / Z-2901)</name>
    <dbReference type="NCBI Taxonomy" id="246194"/>
    <lineage>
        <taxon>Bacteria</taxon>
        <taxon>Bacillati</taxon>
        <taxon>Bacillota</taxon>
        <taxon>Clostridia</taxon>
        <taxon>Thermoanaerobacterales</taxon>
        <taxon>Thermoanaerobacteraceae</taxon>
        <taxon>Carboxydothermus</taxon>
    </lineage>
</organism>
<evidence type="ECO:0000255" key="1">
    <source>
        <dbReference type="HAMAP-Rule" id="MF_00054"/>
    </source>
</evidence>
<comment type="function">
    <text evidence="1">Catalyzes the GTP-dependent ribosomal translocation step during translation elongation. During this step, the ribosome changes from the pre-translocational (PRE) to the post-translocational (POST) state as the newly formed A-site-bound peptidyl-tRNA and P-site-bound deacylated tRNA move to the P and E sites, respectively. Catalyzes the coordinated movement of the two tRNA molecules, the mRNA and conformational changes in the ribosome.</text>
</comment>
<comment type="subcellular location">
    <subcellularLocation>
        <location evidence="1">Cytoplasm</location>
    </subcellularLocation>
</comment>
<comment type="similarity">
    <text evidence="1">Belongs to the TRAFAC class translation factor GTPase superfamily. Classic translation factor GTPase family. EF-G/EF-2 subfamily.</text>
</comment>
<reference key="1">
    <citation type="journal article" date="2005" name="PLoS Genet.">
        <title>Life in hot carbon monoxide: the complete genome sequence of Carboxydothermus hydrogenoformans Z-2901.</title>
        <authorList>
            <person name="Wu M."/>
            <person name="Ren Q."/>
            <person name="Durkin A.S."/>
            <person name="Daugherty S.C."/>
            <person name="Brinkac L.M."/>
            <person name="Dodson R.J."/>
            <person name="Madupu R."/>
            <person name="Sullivan S.A."/>
            <person name="Kolonay J.F."/>
            <person name="Nelson W.C."/>
            <person name="Tallon L.J."/>
            <person name="Jones K.M."/>
            <person name="Ulrich L.E."/>
            <person name="Gonzalez J.M."/>
            <person name="Zhulin I.B."/>
            <person name="Robb F.T."/>
            <person name="Eisen J.A."/>
        </authorList>
    </citation>
    <scope>NUCLEOTIDE SEQUENCE [LARGE SCALE GENOMIC DNA]</scope>
    <source>
        <strain>ATCC BAA-161 / DSM 6008 / Z-2901</strain>
    </source>
</reference>
<feature type="chain" id="PRO_0000225200" description="Elongation factor G">
    <location>
        <begin position="1"/>
        <end position="692"/>
    </location>
</feature>
<feature type="domain" description="tr-type G">
    <location>
        <begin position="8"/>
        <end position="282"/>
    </location>
</feature>
<feature type="binding site" evidence="1">
    <location>
        <begin position="17"/>
        <end position="24"/>
    </location>
    <ligand>
        <name>GTP</name>
        <dbReference type="ChEBI" id="CHEBI:37565"/>
    </ligand>
</feature>
<feature type="binding site" evidence="1">
    <location>
        <begin position="81"/>
        <end position="85"/>
    </location>
    <ligand>
        <name>GTP</name>
        <dbReference type="ChEBI" id="CHEBI:37565"/>
    </ligand>
</feature>
<feature type="binding site" evidence="1">
    <location>
        <begin position="135"/>
        <end position="138"/>
    </location>
    <ligand>
        <name>GTP</name>
        <dbReference type="ChEBI" id="CHEBI:37565"/>
    </ligand>
</feature>